<gene>
    <name evidence="1" type="primary">tig</name>
    <name type="ordered locus">MT2537</name>
</gene>
<comment type="function">
    <text evidence="1">Involved in protein export. Acts as a chaperone by maintaining the newly synthesized protein in an open conformation. Functions as a peptidyl-prolyl cis-trans isomerase.</text>
</comment>
<comment type="catalytic activity">
    <reaction evidence="1">
        <text>[protein]-peptidylproline (omega=180) = [protein]-peptidylproline (omega=0)</text>
        <dbReference type="Rhea" id="RHEA:16237"/>
        <dbReference type="Rhea" id="RHEA-COMP:10747"/>
        <dbReference type="Rhea" id="RHEA-COMP:10748"/>
        <dbReference type="ChEBI" id="CHEBI:83833"/>
        <dbReference type="ChEBI" id="CHEBI:83834"/>
        <dbReference type="EC" id="5.2.1.8"/>
    </reaction>
</comment>
<comment type="subcellular location">
    <subcellularLocation>
        <location evidence="1">Cytoplasm</location>
    </subcellularLocation>
    <text evidence="1">About half TF is bound to the ribosome near the polypeptide exit tunnel while the other half is free in the cytoplasm.</text>
</comment>
<comment type="domain">
    <text evidence="1">Consists of 3 domains; the N-terminus binds the ribosome, the middle domain has PPIase activity, while the C-terminus has intrinsic chaperone activity on its own.</text>
</comment>
<comment type="similarity">
    <text evidence="1">Belongs to the FKBP-type PPIase family. Tig subfamily.</text>
</comment>
<evidence type="ECO:0000255" key="1">
    <source>
        <dbReference type="HAMAP-Rule" id="MF_00303"/>
    </source>
</evidence>
<evidence type="ECO:0000256" key="2">
    <source>
        <dbReference type="SAM" id="MobiDB-lite"/>
    </source>
</evidence>
<reference key="1">
    <citation type="journal article" date="2002" name="J. Bacteriol.">
        <title>Whole-genome comparison of Mycobacterium tuberculosis clinical and laboratory strains.</title>
        <authorList>
            <person name="Fleischmann R.D."/>
            <person name="Alland D."/>
            <person name="Eisen J.A."/>
            <person name="Carpenter L."/>
            <person name="White O."/>
            <person name="Peterson J.D."/>
            <person name="DeBoy R.T."/>
            <person name="Dodson R.J."/>
            <person name="Gwinn M.L."/>
            <person name="Haft D.H."/>
            <person name="Hickey E.K."/>
            <person name="Kolonay J.F."/>
            <person name="Nelson W.C."/>
            <person name="Umayam L.A."/>
            <person name="Ermolaeva M.D."/>
            <person name="Salzberg S.L."/>
            <person name="Delcher A."/>
            <person name="Utterback T.R."/>
            <person name="Weidman J.F."/>
            <person name="Khouri H.M."/>
            <person name="Gill J."/>
            <person name="Mikula A."/>
            <person name="Bishai W."/>
            <person name="Jacobs W.R. Jr."/>
            <person name="Venter J.C."/>
            <person name="Fraser C.M."/>
        </authorList>
    </citation>
    <scope>NUCLEOTIDE SEQUENCE [LARGE SCALE GENOMIC DNA]</scope>
    <source>
        <strain>CDC 1551 / Oshkosh</strain>
    </source>
</reference>
<name>TIG_MYCTO</name>
<accession>P9WG54</accession>
<accession>L0T9P7</accession>
<accession>O53189</accession>
<keyword id="KW-0131">Cell cycle</keyword>
<keyword id="KW-0132">Cell division</keyword>
<keyword id="KW-0143">Chaperone</keyword>
<keyword id="KW-0963">Cytoplasm</keyword>
<keyword id="KW-0413">Isomerase</keyword>
<keyword id="KW-1185">Reference proteome</keyword>
<keyword id="KW-0697">Rotamase</keyword>
<sequence>MKSTVEQLSPTRVRINVEVPFAELEPDFQRAYKELAKQVRLPGFRPGKAPAKLLEARIGREAMLDQIVNDALPSRYGQAVAESDVQPLGRPNIEVTKKEYGQDLQFTAEVDIRPKISPPDLSALTVSVDPIEIGEDDVDAELQSLRTRFGTLTAVDRPVAVGDVVSIDLSATVDGEDIPNAAAEGLSHEVGSGRLIAGLDDAVVGLSADESRVFTAKLAAGEHAGQEAQVTVTVRSVKERELPEPDDEFAQLASEFDSIDELRASLSDQVRQAKRAQQAEQIRNATIDALLEQVDVPLPESYVQAQFDSVLHSALSGLNHDEARFNELLVEQGSSRAAFDAEARTASEKDVKRQLLLDALADELQVQVGQDDLTERLVTTSRQYGIEPQQLFGYLQERNQLPTMFADVRRELAIRAAVEAATVTDSDGNTIDTSEFFGKRVSAGEAEEAEPADEGAARAASDEATT</sequence>
<proteinExistence type="inferred from homology"/>
<organism>
    <name type="scientific">Mycobacterium tuberculosis (strain CDC 1551 / Oshkosh)</name>
    <dbReference type="NCBI Taxonomy" id="83331"/>
    <lineage>
        <taxon>Bacteria</taxon>
        <taxon>Bacillati</taxon>
        <taxon>Actinomycetota</taxon>
        <taxon>Actinomycetes</taxon>
        <taxon>Mycobacteriales</taxon>
        <taxon>Mycobacteriaceae</taxon>
        <taxon>Mycobacterium</taxon>
        <taxon>Mycobacterium tuberculosis complex</taxon>
    </lineage>
</organism>
<dbReference type="EC" id="5.2.1.8" evidence="1"/>
<dbReference type="EMBL" id="AE000516">
    <property type="protein sequence ID" value="AAK46837.1"/>
    <property type="molecule type" value="Genomic_DNA"/>
</dbReference>
<dbReference type="PIR" id="E70865">
    <property type="entry name" value="E70865"/>
</dbReference>
<dbReference type="RefSeq" id="WP_003899331.1">
    <property type="nucleotide sequence ID" value="NZ_KK341227.1"/>
</dbReference>
<dbReference type="SMR" id="P9WG54"/>
<dbReference type="KEGG" id="mtc:MT2537"/>
<dbReference type="PATRIC" id="fig|83331.31.peg.2738"/>
<dbReference type="HOGENOM" id="CLU_033058_3_0_11"/>
<dbReference type="Proteomes" id="UP000001020">
    <property type="component" value="Chromosome"/>
</dbReference>
<dbReference type="GO" id="GO:0005737">
    <property type="term" value="C:cytoplasm"/>
    <property type="evidence" value="ECO:0007669"/>
    <property type="project" value="UniProtKB-SubCell"/>
</dbReference>
<dbReference type="GO" id="GO:0003755">
    <property type="term" value="F:peptidyl-prolyl cis-trans isomerase activity"/>
    <property type="evidence" value="ECO:0007669"/>
    <property type="project" value="UniProtKB-UniRule"/>
</dbReference>
<dbReference type="GO" id="GO:0044183">
    <property type="term" value="F:protein folding chaperone"/>
    <property type="evidence" value="ECO:0007669"/>
    <property type="project" value="TreeGrafter"/>
</dbReference>
<dbReference type="GO" id="GO:0043022">
    <property type="term" value="F:ribosome binding"/>
    <property type="evidence" value="ECO:0007669"/>
    <property type="project" value="TreeGrafter"/>
</dbReference>
<dbReference type="GO" id="GO:0051083">
    <property type="term" value="P:'de novo' cotranslational protein folding"/>
    <property type="evidence" value="ECO:0007669"/>
    <property type="project" value="TreeGrafter"/>
</dbReference>
<dbReference type="GO" id="GO:0051301">
    <property type="term" value="P:cell division"/>
    <property type="evidence" value="ECO:0007669"/>
    <property type="project" value="UniProtKB-KW"/>
</dbReference>
<dbReference type="GO" id="GO:0061077">
    <property type="term" value="P:chaperone-mediated protein folding"/>
    <property type="evidence" value="ECO:0007669"/>
    <property type="project" value="TreeGrafter"/>
</dbReference>
<dbReference type="GO" id="GO:0015031">
    <property type="term" value="P:protein transport"/>
    <property type="evidence" value="ECO:0007669"/>
    <property type="project" value="UniProtKB-UniRule"/>
</dbReference>
<dbReference type="GO" id="GO:0043335">
    <property type="term" value="P:protein unfolding"/>
    <property type="evidence" value="ECO:0007669"/>
    <property type="project" value="TreeGrafter"/>
</dbReference>
<dbReference type="FunFam" id="3.10.50.40:FF:000019">
    <property type="entry name" value="Trigger factor"/>
    <property type="match status" value="1"/>
</dbReference>
<dbReference type="FunFam" id="3.30.70.1050:FF:000003">
    <property type="entry name" value="Trigger factor"/>
    <property type="match status" value="1"/>
</dbReference>
<dbReference type="Gene3D" id="3.10.50.40">
    <property type="match status" value="1"/>
</dbReference>
<dbReference type="Gene3D" id="3.30.70.1050">
    <property type="entry name" value="Trigger factor ribosome-binding domain"/>
    <property type="match status" value="1"/>
</dbReference>
<dbReference type="Gene3D" id="1.10.3120.10">
    <property type="entry name" value="Trigger factor, C-terminal domain"/>
    <property type="match status" value="1"/>
</dbReference>
<dbReference type="HAMAP" id="MF_00303">
    <property type="entry name" value="Trigger_factor_Tig"/>
    <property type="match status" value="1"/>
</dbReference>
<dbReference type="InterPro" id="IPR046357">
    <property type="entry name" value="PPIase_dom_sf"/>
</dbReference>
<dbReference type="InterPro" id="IPR001179">
    <property type="entry name" value="PPIase_FKBP_dom"/>
</dbReference>
<dbReference type="InterPro" id="IPR005215">
    <property type="entry name" value="Trig_fac"/>
</dbReference>
<dbReference type="InterPro" id="IPR008880">
    <property type="entry name" value="Trigger_fac_C"/>
</dbReference>
<dbReference type="InterPro" id="IPR037041">
    <property type="entry name" value="Trigger_fac_C_sf"/>
</dbReference>
<dbReference type="InterPro" id="IPR008881">
    <property type="entry name" value="Trigger_fac_ribosome-bd_bac"/>
</dbReference>
<dbReference type="InterPro" id="IPR036611">
    <property type="entry name" value="Trigger_fac_ribosome-bd_sf"/>
</dbReference>
<dbReference type="InterPro" id="IPR027304">
    <property type="entry name" value="Trigger_fact/SurA_dom_sf"/>
</dbReference>
<dbReference type="NCBIfam" id="TIGR00115">
    <property type="entry name" value="tig"/>
    <property type="match status" value="1"/>
</dbReference>
<dbReference type="PANTHER" id="PTHR30560">
    <property type="entry name" value="TRIGGER FACTOR CHAPERONE AND PEPTIDYL-PROLYL CIS/TRANS ISOMERASE"/>
    <property type="match status" value="1"/>
</dbReference>
<dbReference type="PANTHER" id="PTHR30560:SF3">
    <property type="entry name" value="TRIGGER FACTOR-LIKE PROTEIN TIG, CHLOROPLASTIC"/>
    <property type="match status" value="1"/>
</dbReference>
<dbReference type="Pfam" id="PF00254">
    <property type="entry name" value="FKBP_C"/>
    <property type="match status" value="1"/>
</dbReference>
<dbReference type="Pfam" id="PF05698">
    <property type="entry name" value="Trigger_C"/>
    <property type="match status" value="1"/>
</dbReference>
<dbReference type="Pfam" id="PF05697">
    <property type="entry name" value="Trigger_N"/>
    <property type="match status" value="1"/>
</dbReference>
<dbReference type="PIRSF" id="PIRSF003095">
    <property type="entry name" value="Trigger_factor"/>
    <property type="match status" value="1"/>
</dbReference>
<dbReference type="SUPFAM" id="SSF54534">
    <property type="entry name" value="FKBP-like"/>
    <property type="match status" value="1"/>
</dbReference>
<dbReference type="SUPFAM" id="SSF109998">
    <property type="entry name" value="Triger factor/SurA peptide-binding domain-like"/>
    <property type="match status" value="1"/>
</dbReference>
<dbReference type="SUPFAM" id="SSF102735">
    <property type="entry name" value="Trigger factor ribosome-binding domain"/>
    <property type="match status" value="1"/>
</dbReference>
<feature type="chain" id="PRO_0000428421" description="Trigger factor">
    <location>
        <begin position="1"/>
        <end position="466"/>
    </location>
</feature>
<feature type="domain" description="PPIase FKBP-type" evidence="1">
    <location>
        <begin position="162"/>
        <end position="215"/>
    </location>
</feature>
<feature type="region of interest" description="Disordered" evidence="2">
    <location>
        <begin position="428"/>
        <end position="466"/>
    </location>
</feature>
<feature type="compositionally biased region" description="Low complexity" evidence="2">
    <location>
        <begin position="457"/>
        <end position="466"/>
    </location>
</feature>
<protein>
    <recommendedName>
        <fullName evidence="1">Trigger factor</fullName>
        <shortName evidence="1">TF</shortName>
        <ecNumber evidence="1">5.2.1.8</ecNumber>
    </recommendedName>
    <alternativeName>
        <fullName evidence="1">PPIase</fullName>
    </alternativeName>
</protein>